<keyword id="KW-0010">Activator</keyword>
<keyword id="KW-0238">DNA-binding</keyword>
<keyword id="KW-1185">Reference proteome</keyword>
<keyword id="KW-0804">Transcription</keyword>
<keyword id="KW-0805">Transcription regulation</keyword>
<evidence type="ECO:0000255" key="1">
    <source>
        <dbReference type="HAMAP-Rule" id="MF_00166"/>
    </source>
</evidence>
<name>FIS_SHIDS</name>
<reference key="1">
    <citation type="journal article" date="2005" name="Nucleic Acids Res.">
        <title>Genome dynamics and diversity of Shigella species, the etiologic agents of bacillary dysentery.</title>
        <authorList>
            <person name="Yang F."/>
            <person name="Yang J."/>
            <person name="Zhang X."/>
            <person name="Chen L."/>
            <person name="Jiang Y."/>
            <person name="Yan Y."/>
            <person name="Tang X."/>
            <person name="Wang J."/>
            <person name="Xiong Z."/>
            <person name="Dong J."/>
            <person name="Xue Y."/>
            <person name="Zhu Y."/>
            <person name="Xu X."/>
            <person name="Sun L."/>
            <person name="Chen S."/>
            <person name="Nie H."/>
            <person name="Peng J."/>
            <person name="Xu J."/>
            <person name="Wang Y."/>
            <person name="Yuan Z."/>
            <person name="Wen Y."/>
            <person name="Yao Z."/>
            <person name="Shen Y."/>
            <person name="Qiang B."/>
            <person name="Hou Y."/>
            <person name="Yu J."/>
            <person name="Jin Q."/>
        </authorList>
    </citation>
    <scope>NUCLEOTIDE SEQUENCE [LARGE SCALE GENOMIC DNA]</scope>
    <source>
        <strain>Sd197</strain>
    </source>
</reference>
<gene>
    <name evidence="1" type="primary">fis</name>
    <name type="ordered locus">SDY_3438</name>
</gene>
<feature type="chain" id="PRO_1000023346" description="DNA-binding protein Fis">
    <location>
        <begin position="1"/>
        <end position="98"/>
    </location>
</feature>
<feature type="DNA-binding region" description="H-T-H motif" evidence="1">
    <location>
        <begin position="74"/>
        <end position="93"/>
    </location>
</feature>
<proteinExistence type="inferred from homology"/>
<protein>
    <recommendedName>
        <fullName evidence="1">DNA-binding protein Fis</fullName>
    </recommendedName>
</protein>
<sequence length="98" mass="11240">MFEQRVNSDVLTVSTVNSQDQVTQKPLRDSVKQALKNYFAQLNGQDVNDLYELVLAEVEQPLLDMVMQYTRGNQTRAALMMGINRGTLRKKLKKYGMN</sequence>
<dbReference type="EMBL" id="CP000034">
    <property type="protein sequence ID" value="ABB63428.1"/>
    <property type="molecule type" value="Genomic_DNA"/>
</dbReference>
<dbReference type="RefSeq" id="WP_000462905.1">
    <property type="nucleotide sequence ID" value="NC_007606.1"/>
</dbReference>
<dbReference type="RefSeq" id="YP_404919.1">
    <property type="nucleotide sequence ID" value="NC_007606.1"/>
</dbReference>
<dbReference type="SMR" id="Q32B77"/>
<dbReference type="STRING" id="300267.SDY_3438"/>
<dbReference type="EnsemblBacteria" id="ABB63428">
    <property type="protein sequence ID" value="ABB63428"/>
    <property type="gene ID" value="SDY_3438"/>
</dbReference>
<dbReference type="GeneID" id="98390389"/>
<dbReference type="KEGG" id="sdy:SDY_3438"/>
<dbReference type="PATRIC" id="fig|300267.13.peg.4094"/>
<dbReference type="HOGENOM" id="CLU_158040_3_0_6"/>
<dbReference type="PRO" id="PR:Q32B77"/>
<dbReference type="Proteomes" id="UP000002716">
    <property type="component" value="Chromosome"/>
</dbReference>
<dbReference type="GO" id="GO:0003700">
    <property type="term" value="F:DNA-binding transcription factor activity"/>
    <property type="evidence" value="ECO:0007669"/>
    <property type="project" value="UniProtKB-UniRule"/>
</dbReference>
<dbReference type="GO" id="GO:0043565">
    <property type="term" value="F:sequence-specific DNA binding"/>
    <property type="evidence" value="ECO:0007669"/>
    <property type="project" value="InterPro"/>
</dbReference>
<dbReference type="FunFam" id="1.10.10.60:FF:000006">
    <property type="entry name" value="DNA-binding protein Fis"/>
    <property type="match status" value="1"/>
</dbReference>
<dbReference type="Gene3D" id="1.10.10.60">
    <property type="entry name" value="Homeodomain-like"/>
    <property type="match status" value="1"/>
</dbReference>
<dbReference type="HAMAP" id="MF_00166">
    <property type="entry name" value="DNA_binding_Fis"/>
    <property type="match status" value="1"/>
</dbReference>
<dbReference type="InterPro" id="IPR005412">
    <property type="entry name" value="Fis_DNA-bd"/>
</dbReference>
<dbReference type="InterPro" id="IPR009057">
    <property type="entry name" value="Homeodomain-like_sf"/>
</dbReference>
<dbReference type="InterPro" id="IPR002197">
    <property type="entry name" value="HTH_Fis"/>
</dbReference>
<dbReference type="InterPro" id="IPR050207">
    <property type="entry name" value="Trans_regulatory_Fis"/>
</dbReference>
<dbReference type="NCBIfam" id="NF001659">
    <property type="entry name" value="PRK00430.1"/>
    <property type="match status" value="1"/>
</dbReference>
<dbReference type="PANTHER" id="PTHR47918">
    <property type="entry name" value="DNA-BINDING PROTEIN FIS"/>
    <property type="match status" value="1"/>
</dbReference>
<dbReference type="PANTHER" id="PTHR47918:SF1">
    <property type="entry name" value="DNA-BINDING PROTEIN FIS"/>
    <property type="match status" value="1"/>
</dbReference>
<dbReference type="Pfam" id="PF02954">
    <property type="entry name" value="HTH_8"/>
    <property type="match status" value="1"/>
</dbReference>
<dbReference type="PIRSF" id="PIRSF002097">
    <property type="entry name" value="DNA-binding_Fis"/>
    <property type="match status" value="1"/>
</dbReference>
<dbReference type="PRINTS" id="PR01591">
    <property type="entry name" value="DNABINDNGFIS"/>
</dbReference>
<dbReference type="PRINTS" id="PR01590">
    <property type="entry name" value="HTHFIS"/>
</dbReference>
<dbReference type="SUPFAM" id="SSF46689">
    <property type="entry name" value="Homeodomain-like"/>
    <property type="match status" value="1"/>
</dbReference>
<organism>
    <name type="scientific">Shigella dysenteriae serotype 1 (strain Sd197)</name>
    <dbReference type="NCBI Taxonomy" id="300267"/>
    <lineage>
        <taxon>Bacteria</taxon>
        <taxon>Pseudomonadati</taxon>
        <taxon>Pseudomonadota</taxon>
        <taxon>Gammaproteobacteria</taxon>
        <taxon>Enterobacterales</taxon>
        <taxon>Enterobacteriaceae</taxon>
        <taxon>Shigella</taxon>
    </lineage>
</organism>
<comment type="function">
    <text evidence="1">Activates ribosomal RNA transcription. Plays a direct role in upstream activation of rRNA promoters.</text>
</comment>
<comment type="subunit">
    <text evidence="1">Homodimer.</text>
</comment>
<comment type="similarity">
    <text evidence="1">Belongs to the transcriptional regulatory Fis family.</text>
</comment>
<accession>Q32B77</accession>